<keyword id="KW-0067">ATP-binding</keyword>
<keyword id="KW-0963">Cytoplasm</keyword>
<keyword id="KW-0436">Ligase</keyword>
<keyword id="KW-0460">Magnesium</keyword>
<keyword id="KW-0479">Metal-binding</keyword>
<keyword id="KW-0547">Nucleotide-binding</keyword>
<keyword id="KW-0658">Purine biosynthesis</keyword>
<organism>
    <name type="scientific">Staphylococcus aureus (strain USA300)</name>
    <dbReference type="NCBI Taxonomy" id="367830"/>
    <lineage>
        <taxon>Bacteria</taxon>
        <taxon>Bacillati</taxon>
        <taxon>Bacillota</taxon>
        <taxon>Bacilli</taxon>
        <taxon>Bacillales</taxon>
        <taxon>Staphylococcaceae</taxon>
        <taxon>Staphylococcus</taxon>
    </lineage>
</organism>
<name>PURL_STAA3</name>
<sequence length="729" mass="79536">MSKFIEPSVEEIKLEKVYQDMGLSDQEYEKVCDILGRQPNFTETGIFSVMWSEHCSYKHSKPFLKQFPTSGDHVLMGPGEGAGVVDIGDNQAVVFKVESHNHPSAIEPYQGAATGVGGIIRDIVSIGARPINLLNSLRFGELDNKQNQRLLKGVVKGIGGYGNCIGIPTTAGEIEFDERYDGNPLVNAMCVGVINHDMIQKGTAKGVGNSVIYVGLKTGRDGIHGATFASEELTEESESKRPSVQIGDPFVGKKLMEATLEAITFDELVGIQDMGAAGLTSSSSEMAAKGGSGLHLRLEQVPTREPGISPYEMMLSETQERMLLVVEKGTEQKFLDLFDKHELDSAVIGEVTDTNRFVLTYDDEVYADIPVEPLADEAPVYILEGEEKDYNTSKNDYTHIDVKDTFFKLLKHPTIASKHYLYDQYDQQVGANTIIKPGLQASVVRVEGTNKAIASTIDGEARYVYNNPYEGGKMVVAEAYRNLIAVGATPLAMTDCLNYGSPEKKEIYQQLIDSTKGMAEACDILKTPVVSGNVSLYNETKGTSIFPTPVVGMVGLIENVNYLNDFEPQVGDKLYLIGDTKDDFGGSQLEKLIYGKVNHEFESLDLSSEVEKGESIKTAIREGLLSHVQTVGKGGLLITLAKLSAHYGLGLKSSIDITNAQLFSETQGRYVVSVKSGKTLNIDNAIEIGLLTDSDNFKVTTPYTEISENVSDIKQIWEGAIAQCLTTQD</sequence>
<feature type="chain" id="PRO_0000236666" description="Phosphoribosylformylglycinamidine synthase subunit PurL">
    <location>
        <begin position="1"/>
        <end position="729"/>
    </location>
</feature>
<feature type="active site" evidence="1">
    <location>
        <position position="54"/>
    </location>
</feature>
<feature type="active site" description="Proton acceptor" evidence="1">
    <location>
        <position position="100"/>
    </location>
</feature>
<feature type="binding site" evidence="1">
    <location>
        <position position="57"/>
    </location>
    <ligand>
        <name>ATP</name>
        <dbReference type="ChEBI" id="CHEBI:30616"/>
    </ligand>
</feature>
<feature type="binding site" evidence="1">
    <location>
        <position position="96"/>
    </location>
    <ligand>
        <name>ATP</name>
        <dbReference type="ChEBI" id="CHEBI:30616"/>
    </ligand>
</feature>
<feature type="binding site" evidence="1">
    <location>
        <position position="98"/>
    </location>
    <ligand>
        <name>Mg(2+)</name>
        <dbReference type="ChEBI" id="CHEBI:18420"/>
        <label>1</label>
    </ligand>
</feature>
<feature type="binding site" evidence="1">
    <location>
        <begin position="99"/>
        <end position="102"/>
    </location>
    <ligand>
        <name>substrate</name>
    </ligand>
</feature>
<feature type="binding site" evidence="1">
    <location>
        <position position="121"/>
    </location>
    <ligand>
        <name>substrate</name>
    </ligand>
</feature>
<feature type="binding site" evidence="1">
    <location>
        <position position="122"/>
    </location>
    <ligand>
        <name>Mg(2+)</name>
        <dbReference type="ChEBI" id="CHEBI:18420"/>
        <label>2</label>
    </ligand>
</feature>
<feature type="binding site" evidence="1">
    <location>
        <position position="245"/>
    </location>
    <ligand>
        <name>substrate</name>
    </ligand>
</feature>
<feature type="binding site" evidence="1">
    <location>
        <position position="273"/>
    </location>
    <ligand>
        <name>Mg(2+)</name>
        <dbReference type="ChEBI" id="CHEBI:18420"/>
        <label>2</label>
    </ligand>
</feature>
<feature type="binding site" evidence="1">
    <location>
        <begin position="317"/>
        <end position="319"/>
    </location>
    <ligand>
        <name>substrate</name>
    </ligand>
</feature>
<feature type="binding site" evidence="1">
    <location>
        <position position="495"/>
    </location>
    <ligand>
        <name>ATP</name>
        <dbReference type="ChEBI" id="CHEBI:30616"/>
    </ligand>
</feature>
<feature type="binding site" evidence="1">
    <location>
        <position position="532"/>
    </location>
    <ligand>
        <name>ATP</name>
        <dbReference type="ChEBI" id="CHEBI:30616"/>
    </ligand>
</feature>
<feature type="binding site" evidence="1">
    <location>
        <position position="533"/>
    </location>
    <ligand>
        <name>Mg(2+)</name>
        <dbReference type="ChEBI" id="CHEBI:18420"/>
        <label>1</label>
    </ligand>
</feature>
<feature type="binding site" evidence="1">
    <location>
        <position position="535"/>
    </location>
    <ligand>
        <name>substrate</name>
    </ligand>
</feature>
<protein>
    <recommendedName>
        <fullName evidence="1">Phosphoribosylformylglycinamidine synthase subunit PurL</fullName>
        <shortName evidence="1">FGAM synthase</shortName>
        <ecNumber evidence="1">6.3.5.3</ecNumber>
    </recommendedName>
    <alternativeName>
        <fullName evidence="1">Formylglycinamide ribonucleotide amidotransferase subunit II</fullName>
        <shortName evidence="1">FGAR amidotransferase II</shortName>
        <shortName evidence="1">FGAR-AT II</shortName>
    </alternativeName>
    <alternativeName>
        <fullName evidence="1">Glutamine amidotransferase PurL</fullName>
    </alternativeName>
    <alternativeName>
        <fullName evidence="1">Phosphoribosylformylglycinamidine synthase subunit II</fullName>
    </alternativeName>
</protein>
<reference key="1">
    <citation type="journal article" date="2006" name="Lancet">
        <title>Complete genome sequence of USA300, an epidemic clone of community-acquired meticillin-resistant Staphylococcus aureus.</title>
        <authorList>
            <person name="Diep B.A."/>
            <person name="Gill S.R."/>
            <person name="Chang R.F."/>
            <person name="Phan T.H."/>
            <person name="Chen J.H."/>
            <person name="Davidson M.G."/>
            <person name="Lin F."/>
            <person name="Lin J."/>
            <person name="Carleton H.A."/>
            <person name="Mongodin E.F."/>
            <person name="Sensabaugh G.F."/>
            <person name="Perdreau-Remington F."/>
        </authorList>
    </citation>
    <scope>NUCLEOTIDE SEQUENCE [LARGE SCALE GENOMIC DNA]</scope>
    <source>
        <strain>USA300</strain>
    </source>
</reference>
<accession>Q2FI09</accession>
<proteinExistence type="inferred from homology"/>
<evidence type="ECO:0000255" key="1">
    <source>
        <dbReference type="HAMAP-Rule" id="MF_00420"/>
    </source>
</evidence>
<comment type="function">
    <text evidence="1">Part of the phosphoribosylformylglycinamidine synthase complex involved in the purines biosynthetic pathway. Catalyzes the ATP-dependent conversion of formylglycinamide ribonucleotide (FGAR) and glutamine to yield formylglycinamidine ribonucleotide (FGAM) and glutamate. The FGAM synthase complex is composed of three subunits. PurQ produces an ammonia molecule by converting glutamine to glutamate. PurL transfers the ammonia molecule to FGAR to form FGAM in an ATP-dependent manner. PurS interacts with PurQ and PurL and is thought to assist in the transfer of the ammonia molecule from PurQ to PurL.</text>
</comment>
<comment type="catalytic activity">
    <reaction evidence="1">
        <text>N(2)-formyl-N(1)-(5-phospho-beta-D-ribosyl)glycinamide + L-glutamine + ATP + H2O = 2-formamido-N(1)-(5-O-phospho-beta-D-ribosyl)acetamidine + L-glutamate + ADP + phosphate + H(+)</text>
        <dbReference type="Rhea" id="RHEA:17129"/>
        <dbReference type="ChEBI" id="CHEBI:15377"/>
        <dbReference type="ChEBI" id="CHEBI:15378"/>
        <dbReference type="ChEBI" id="CHEBI:29985"/>
        <dbReference type="ChEBI" id="CHEBI:30616"/>
        <dbReference type="ChEBI" id="CHEBI:43474"/>
        <dbReference type="ChEBI" id="CHEBI:58359"/>
        <dbReference type="ChEBI" id="CHEBI:147286"/>
        <dbReference type="ChEBI" id="CHEBI:147287"/>
        <dbReference type="ChEBI" id="CHEBI:456216"/>
        <dbReference type="EC" id="6.3.5.3"/>
    </reaction>
</comment>
<comment type="pathway">
    <text evidence="1">Purine metabolism; IMP biosynthesis via de novo pathway; 5-amino-1-(5-phospho-D-ribosyl)imidazole from N(2)-formyl-N(1)-(5-phospho-D-ribosyl)glycinamide: step 1/2.</text>
</comment>
<comment type="subunit">
    <text evidence="1">Monomer. Part of the FGAM synthase complex composed of 1 PurL, 1 PurQ and 2 PurS subunits.</text>
</comment>
<comment type="subcellular location">
    <subcellularLocation>
        <location evidence="1">Cytoplasm</location>
    </subcellularLocation>
</comment>
<comment type="similarity">
    <text evidence="1">Belongs to the FGAMS family.</text>
</comment>
<gene>
    <name evidence="1" type="primary">purL</name>
    <name type="ordered locus">SAUSA300_0971</name>
</gene>
<dbReference type="EC" id="6.3.5.3" evidence="1"/>
<dbReference type="EMBL" id="CP000255">
    <property type="protein sequence ID" value="ABD22154.1"/>
    <property type="molecule type" value="Genomic_DNA"/>
</dbReference>
<dbReference type="RefSeq" id="WP_000032727.1">
    <property type="nucleotide sequence ID" value="NZ_CP027476.1"/>
</dbReference>
<dbReference type="SMR" id="Q2FI09"/>
<dbReference type="KEGG" id="saa:SAUSA300_0971"/>
<dbReference type="HOGENOM" id="CLU_003100_0_1_9"/>
<dbReference type="OMA" id="AIHPTPV"/>
<dbReference type="UniPathway" id="UPA00074">
    <property type="reaction ID" value="UER00128"/>
</dbReference>
<dbReference type="Proteomes" id="UP000001939">
    <property type="component" value="Chromosome"/>
</dbReference>
<dbReference type="GO" id="GO:0005737">
    <property type="term" value="C:cytoplasm"/>
    <property type="evidence" value="ECO:0007669"/>
    <property type="project" value="UniProtKB-SubCell"/>
</dbReference>
<dbReference type="GO" id="GO:0005524">
    <property type="term" value="F:ATP binding"/>
    <property type="evidence" value="ECO:0007669"/>
    <property type="project" value="UniProtKB-UniRule"/>
</dbReference>
<dbReference type="GO" id="GO:0000287">
    <property type="term" value="F:magnesium ion binding"/>
    <property type="evidence" value="ECO:0007669"/>
    <property type="project" value="UniProtKB-UniRule"/>
</dbReference>
<dbReference type="GO" id="GO:0004642">
    <property type="term" value="F:phosphoribosylformylglycinamidine synthase activity"/>
    <property type="evidence" value="ECO:0007669"/>
    <property type="project" value="UniProtKB-UniRule"/>
</dbReference>
<dbReference type="GO" id="GO:0006189">
    <property type="term" value="P:'de novo' IMP biosynthetic process"/>
    <property type="evidence" value="ECO:0007669"/>
    <property type="project" value="UniProtKB-UniRule"/>
</dbReference>
<dbReference type="CDD" id="cd02203">
    <property type="entry name" value="PurL_repeat1"/>
    <property type="match status" value="1"/>
</dbReference>
<dbReference type="CDD" id="cd02204">
    <property type="entry name" value="PurL_repeat2"/>
    <property type="match status" value="1"/>
</dbReference>
<dbReference type="FunFam" id="3.30.1330.10:FF:000004">
    <property type="entry name" value="Phosphoribosylformylglycinamidine synthase subunit PurL"/>
    <property type="match status" value="1"/>
</dbReference>
<dbReference type="Gene3D" id="3.90.650.10">
    <property type="entry name" value="PurM-like C-terminal domain"/>
    <property type="match status" value="2"/>
</dbReference>
<dbReference type="Gene3D" id="3.30.1330.10">
    <property type="entry name" value="PurM-like, N-terminal domain"/>
    <property type="match status" value="2"/>
</dbReference>
<dbReference type="HAMAP" id="MF_00420">
    <property type="entry name" value="PurL_2"/>
    <property type="match status" value="1"/>
</dbReference>
<dbReference type="InterPro" id="IPR010074">
    <property type="entry name" value="PRibForGlyAmidine_synth_PurL"/>
</dbReference>
<dbReference type="InterPro" id="IPR041609">
    <property type="entry name" value="PurL_linker"/>
</dbReference>
<dbReference type="InterPro" id="IPR010918">
    <property type="entry name" value="PurM-like_C_dom"/>
</dbReference>
<dbReference type="InterPro" id="IPR036676">
    <property type="entry name" value="PurM-like_C_sf"/>
</dbReference>
<dbReference type="InterPro" id="IPR016188">
    <property type="entry name" value="PurM-like_N"/>
</dbReference>
<dbReference type="InterPro" id="IPR036921">
    <property type="entry name" value="PurM-like_N_sf"/>
</dbReference>
<dbReference type="NCBIfam" id="TIGR01736">
    <property type="entry name" value="FGAM_synth_II"/>
    <property type="match status" value="1"/>
</dbReference>
<dbReference type="NCBIfam" id="NF002290">
    <property type="entry name" value="PRK01213.1"/>
    <property type="match status" value="1"/>
</dbReference>
<dbReference type="PANTHER" id="PTHR43555">
    <property type="entry name" value="PHOSPHORIBOSYLFORMYLGLYCINAMIDINE SYNTHASE SUBUNIT PURL"/>
    <property type="match status" value="1"/>
</dbReference>
<dbReference type="PANTHER" id="PTHR43555:SF1">
    <property type="entry name" value="PHOSPHORIBOSYLFORMYLGLYCINAMIDINE SYNTHASE SUBUNIT PURL"/>
    <property type="match status" value="1"/>
</dbReference>
<dbReference type="Pfam" id="PF00586">
    <property type="entry name" value="AIRS"/>
    <property type="match status" value="2"/>
</dbReference>
<dbReference type="Pfam" id="PF02769">
    <property type="entry name" value="AIRS_C"/>
    <property type="match status" value="1"/>
</dbReference>
<dbReference type="Pfam" id="PF18072">
    <property type="entry name" value="FGAR-AT_linker"/>
    <property type="match status" value="1"/>
</dbReference>
<dbReference type="PIRSF" id="PIRSF001587">
    <property type="entry name" value="FGAM_synthase_II"/>
    <property type="match status" value="1"/>
</dbReference>
<dbReference type="SUPFAM" id="SSF56042">
    <property type="entry name" value="PurM C-terminal domain-like"/>
    <property type="match status" value="2"/>
</dbReference>
<dbReference type="SUPFAM" id="SSF55326">
    <property type="entry name" value="PurM N-terminal domain-like"/>
    <property type="match status" value="2"/>
</dbReference>